<keyword id="KW-1003">Cell membrane</keyword>
<keyword id="KW-0297">G-protein coupled receptor</keyword>
<keyword id="KW-0325">Glycoprotein</keyword>
<keyword id="KW-0472">Membrane</keyword>
<keyword id="KW-0675">Receptor</keyword>
<keyword id="KW-1185">Reference proteome</keyword>
<keyword id="KW-0732">Signal</keyword>
<keyword id="KW-0807">Transducer</keyword>
<keyword id="KW-0812">Transmembrane</keyword>
<keyword id="KW-1133">Transmembrane helix</keyword>
<dbReference type="EMBL" id="AY916759">
    <property type="protein sequence ID" value="AAX98692.1"/>
    <property type="molecule type" value="mRNA"/>
</dbReference>
<dbReference type="RefSeq" id="NP_001026991.1">
    <property type="nucleotide sequence ID" value="NM_001031821.1"/>
</dbReference>
<dbReference type="SMR" id="Q49HH9"/>
<dbReference type="FunCoup" id="Q49HH9">
    <property type="interactions" value="66"/>
</dbReference>
<dbReference type="STRING" id="9615.ENSCAFP00000028447"/>
<dbReference type="GlyCosmos" id="Q49HH9">
    <property type="glycosylation" value="2 sites, No reported glycans"/>
</dbReference>
<dbReference type="PaxDb" id="9612-ENSCAFP00000028447"/>
<dbReference type="GeneID" id="489594"/>
<dbReference type="KEGG" id="cfa:489594"/>
<dbReference type="CTD" id="83756"/>
<dbReference type="eggNOG" id="KOG1056">
    <property type="taxonomic scope" value="Eukaryota"/>
</dbReference>
<dbReference type="InParanoid" id="Q49HH9"/>
<dbReference type="OrthoDB" id="5984008at2759"/>
<dbReference type="Proteomes" id="UP000002254">
    <property type="component" value="Unplaced"/>
</dbReference>
<dbReference type="Proteomes" id="UP000694429">
    <property type="component" value="Unplaced"/>
</dbReference>
<dbReference type="Proteomes" id="UP000694542">
    <property type="component" value="Unplaced"/>
</dbReference>
<dbReference type="Proteomes" id="UP000805418">
    <property type="component" value="Unplaced"/>
</dbReference>
<dbReference type="GO" id="GO:0005886">
    <property type="term" value="C:plasma membrane"/>
    <property type="evidence" value="ECO:0000318"/>
    <property type="project" value="GO_Central"/>
</dbReference>
<dbReference type="GO" id="GO:0004930">
    <property type="term" value="F:G protein-coupled receptor activity"/>
    <property type="evidence" value="ECO:0000318"/>
    <property type="project" value="GO_Central"/>
</dbReference>
<dbReference type="GO" id="GO:0001582">
    <property type="term" value="P:detection of chemical stimulus involved in sensory perception of sweet taste"/>
    <property type="evidence" value="ECO:0007669"/>
    <property type="project" value="GOC"/>
</dbReference>
<dbReference type="GO" id="GO:0050916">
    <property type="term" value="P:sensory perception of sweet taste"/>
    <property type="evidence" value="ECO:0000318"/>
    <property type="project" value="GO_Central"/>
</dbReference>
<dbReference type="GO" id="GO:0050917">
    <property type="term" value="P:sensory perception of umami taste"/>
    <property type="evidence" value="ECO:0000318"/>
    <property type="project" value="GO_Central"/>
</dbReference>
<dbReference type="FunFam" id="3.40.50.2300:FF:000016">
    <property type="entry name" value="Taste 1 receptor member 2"/>
    <property type="match status" value="1"/>
</dbReference>
<dbReference type="FunFam" id="2.10.50.30:FF:000004">
    <property type="entry name" value="Taste receptor type 1 member 3-like protein"/>
    <property type="match status" value="1"/>
</dbReference>
<dbReference type="Gene3D" id="3.40.50.2300">
    <property type="match status" value="2"/>
</dbReference>
<dbReference type="Gene3D" id="2.10.50.30">
    <property type="entry name" value="GPCR, family 3, nine cysteines domain"/>
    <property type="match status" value="1"/>
</dbReference>
<dbReference type="InterPro" id="IPR001828">
    <property type="entry name" value="ANF_lig-bd_rcpt"/>
</dbReference>
<dbReference type="InterPro" id="IPR000337">
    <property type="entry name" value="GPCR_3"/>
</dbReference>
<dbReference type="InterPro" id="IPR011500">
    <property type="entry name" value="GPCR_3_9-Cys_dom"/>
</dbReference>
<dbReference type="InterPro" id="IPR038550">
    <property type="entry name" value="GPCR_3_9-Cys_sf"/>
</dbReference>
<dbReference type="InterPro" id="IPR017978">
    <property type="entry name" value="GPCR_3_C"/>
</dbReference>
<dbReference type="InterPro" id="IPR000068">
    <property type="entry name" value="GPCR_3_Ca_sens_rcpt-rel"/>
</dbReference>
<dbReference type="InterPro" id="IPR028082">
    <property type="entry name" value="Peripla_BP_I"/>
</dbReference>
<dbReference type="PANTHER" id="PTHR24061">
    <property type="entry name" value="CALCIUM-SENSING RECEPTOR-RELATED"/>
    <property type="match status" value="1"/>
</dbReference>
<dbReference type="PANTHER" id="PTHR24061:SF435">
    <property type="entry name" value="TASTE RECEPTOR TYPE 1 MEMBER 3"/>
    <property type="match status" value="1"/>
</dbReference>
<dbReference type="Pfam" id="PF00003">
    <property type="entry name" value="7tm_3"/>
    <property type="match status" value="1"/>
</dbReference>
<dbReference type="Pfam" id="PF01094">
    <property type="entry name" value="ANF_receptor"/>
    <property type="match status" value="1"/>
</dbReference>
<dbReference type="Pfam" id="PF07562">
    <property type="entry name" value="NCD3G"/>
    <property type="match status" value="1"/>
</dbReference>
<dbReference type="PRINTS" id="PR00592">
    <property type="entry name" value="CASENSINGR"/>
</dbReference>
<dbReference type="PRINTS" id="PR00248">
    <property type="entry name" value="GPCRMGR"/>
</dbReference>
<dbReference type="SUPFAM" id="SSF53822">
    <property type="entry name" value="Periplasmic binding protein-like I"/>
    <property type="match status" value="1"/>
</dbReference>
<dbReference type="PROSITE" id="PS50259">
    <property type="entry name" value="G_PROTEIN_RECEP_F3_4"/>
    <property type="match status" value="1"/>
</dbReference>
<name>TS1R3_CANLF</name>
<gene>
    <name type="primary">TAS1R3</name>
    <name type="synonym">T1R3</name>
</gene>
<reference key="1">
    <citation type="journal article" date="2005" name="PLoS Genet.">
        <title>Pseudogenization of a sweet-receptor gene accounts for cats' indifference toward sugar.</title>
        <authorList>
            <person name="Li X."/>
            <person name="Li W."/>
            <person name="Wang H."/>
            <person name="Cao J."/>
            <person name="Maehashi K."/>
            <person name="Hong L."/>
            <person name="Bachmanov A.A."/>
            <person name="Reed D.R."/>
            <person name="Legrand-Defretin V."/>
            <person name="Beauchamp G.K."/>
            <person name="Brand J.G."/>
        </authorList>
    </citation>
    <scope>NUCLEOTIDE SEQUENCE [MRNA]</scope>
</reference>
<comment type="function">
    <text evidence="1">Putative taste receptor. TAS1R1/TAS1R3 responds to the umami taste stimulus (the taste of monosodium glutamate). TAS1R2/TAS1R3 recognizes diverse natural and synthetic sweeteners. TAS1R3 is essential for the recognition and response to the disaccharide trehalose (By similarity). Sequence differences within and between species can significantly influence the selectivity and specificity of taste responses (By similarity).</text>
</comment>
<comment type="subunit">
    <text evidence="1">Forms homodimers or heterodimers with TAS1R1 and TAS1R2.</text>
</comment>
<comment type="subcellular location">
    <subcellularLocation>
        <location evidence="1">Cell membrane</location>
        <topology evidence="1">Multi-pass membrane protein</topology>
    </subcellularLocation>
</comment>
<comment type="similarity">
    <text evidence="3">Belongs to the G-protein coupled receptor 3 family. TAS1R subfamily.</text>
</comment>
<proteinExistence type="evidence at transcript level"/>
<feature type="signal peptide" evidence="2">
    <location>
        <begin position="1"/>
        <end position="18"/>
    </location>
</feature>
<feature type="chain" id="PRO_0000240182" description="Taste receptor type 1 member 3">
    <location>
        <begin position="19"/>
        <end position="845"/>
    </location>
</feature>
<feature type="topological domain" description="Extracellular" evidence="2">
    <location>
        <begin position="19"/>
        <end position="568"/>
    </location>
</feature>
<feature type="transmembrane region" description="Helical; Name=1" evidence="2">
    <location>
        <begin position="569"/>
        <end position="589"/>
    </location>
</feature>
<feature type="topological domain" description="Cytoplasmic" evidence="2">
    <location>
        <begin position="590"/>
        <end position="601"/>
    </location>
</feature>
<feature type="transmembrane region" description="Helical; Name=2" evidence="2">
    <location>
        <begin position="602"/>
        <end position="622"/>
    </location>
</feature>
<feature type="topological domain" description="Extracellular" evidence="2">
    <location>
        <begin position="623"/>
        <end position="637"/>
    </location>
</feature>
<feature type="transmembrane region" description="Helical; Name=3" evidence="2">
    <location>
        <begin position="638"/>
        <end position="658"/>
    </location>
</feature>
<feature type="topological domain" description="Cytoplasmic" evidence="2">
    <location>
        <begin position="659"/>
        <end position="680"/>
    </location>
</feature>
<feature type="transmembrane region" description="Helical; Name=4" evidence="2">
    <location>
        <begin position="681"/>
        <end position="701"/>
    </location>
</feature>
<feature type="topological domain" description="Extracellular" evidence="2">
    <location>
        <begin position="702"/>
        <end position="727"/>
    </location>
</feature>
<feature type="transmembrane region" description="Helical; Name=5" evidence="2">
    <location>
        <begin position="728"/>
        <end position="748"/>
    </location>
</feature>
<feature type="topological domain" description="Cytoplasmic" evidence="2">
    <location>
        <begin position="749"/>
        <end position="760"/>
    </location>
</feature>
<feature type="transmembrane region" description="Helical; Name=6" evidence="2">
    <location>
        <begin position="761"/>
        <end position="781"/>
    </location>
</feature>
<feature type="topological domain" description="Extracellular" evidence="2">
    <location>
        <begin position="782"/>
        <end position="789"/>
    </location>
</feature>
<feature type="transmembrane region" description="Helical; Name=7" evidence="2">
    <location>
        <begin position="790"/>
        <end position="810"/>
    </location>
</feature>
<feature type="topological domain" description="Cytoplasmic" evidence="2">
    <location>
        <begin position="811"/>
        <end position="845"/>
    </location>
</feature>
<feature type="glycosylation site" description="N-linked (GlcNAc...) asparagine" evidence="2">
    <location>
        <position position="128"/>
    </location>
</feature>
<feature type="glycosylation site" description="N-linked (GlcNAc...) asparagine" evidence="2">
    <location>
        <position position="262"/>
    </location>
</feature>
<organism>
    <name type="scientific">Canis lupus familiaris</name>
    <name type="common">Dog</name>
    <name type="synonym">Canis familiaris</name>
    <dbReference type="NCBI Taxonomy" id="9615"/>
    <lineage>
        <taxon>Eukaryota</taxon>
        <taxon>Metazoa</taxon>
        <taxon>Chordata</taxon>
        <taxon>Craniata</taxon>
        <taxon>Vertebrata</taxon>
        <taxon>Euteleostomi</taxon>
        <taxon>Mammalia</taxon>
        <taxon>Eutheria</taxon>
        <taxon>Laurasiatheria</taxon>
        <taxon>Carnivora</taxon>
        <taxon>Caniformia</taxon>
        <taxon>Canidae</taxon>
        <taxon>Canis</taxon>
    </lineage>
</organism>
<sequence>MAGLMLLSLMALLGLGAGAPLCLSRQLRMQGDYVLGGLFPLGTAEDTGLSDRTQPNATVCTRFSSLGLLWALAMKMAVEEVNNRSTLLPGLRLGYDLFDTCSEPVVAMKPSLMFMAKAGSCDIAAYCNYTQYQPRVLAVIGPHSSELALITGKFFSFFLMPQVSYGASTDRLSNRETFPSFFRTVSSDRVQAVAMVELLQELGWNWVAAVGSDDEYGRQGLSLFSSLANARGICIAHEGLVPLPHTSSLRLGTVQGLLHQVNQSSVQVVVLFSSTRAARTLFSYSIHCRLSPKVWVASEAWLTSDLVMTLPGMAEVGTVLGFLQQGAPIPEFPSYVQTCLALAADPAFCASLDAEQPGLEEHVVGPRCPQCDHVTLEAMSAGLLHHQTFAAYAAVYGVAQALHNTLLCNASGCPPREPVRPWQLLENMYNLTFRVRGLALQFDARGNVNMDYDLKLWVWRDLKPELRTVGAFNGRLKVWHSQMSWHTPGNQRPVSQCSRQCGEGQVRRVKGFHSCCYDCVDCKAGTYQRSPDDLLCTQCDQNQWSPDRSTRCFPRRLTFLAWGQPAVLVLLILLALALGLVLVALGLFIRHRDSPLVQASGGPRACFGLACLGLVCLSVLLFPGQPGPASCLAQQPLLHLPLTGCLSTLFLQAAQIFVGSELPSSWADQLRRCLQGPWAWLLVLLALLAEAALCAWYLVAFPPEVVTDWWVLPTQVLVHCRMRSWISFGLLHAINAMLAFLCFLGTFLVQSRPGRYNGARGLTFAMLAYFITWISFVPLFANVHVAYQPTVQMAAILLCALGILATFHLPKCYLLLQQLELNNPEFFLGDDARGQGSSGSGGKET</sequence>
<protein>
    <recommendedName>
        <fullName>Taste receptor type 1 member 3</fullName>
    </recommendedName>
    <alternativeName>
        <fullName>Sweet taste receptor T1R3</fullName>
    </alternativeName>
</protein>
<accession>Q49HH9</accession>
<evidence type="ECO:0000250" key="1"/>
<evidence type="ECO:0000255" key="2"/>
<evidence type="ECO:0000305" key="3"/>